<sequence>MDWFHCNQCFRKDGAHFFVTSCGHIFCKKCVTLEKCAVCGTACKHLALSDNLKPQEKMFFKSPVETALQYFSHISQVWSFQKKQTDLLIAFYKHRITKLETAMQEAQQALVSQDKELSVLRKENGELKKFLAILKESPSRYQGSRSITPRPVGITSPSQSVTPRPSFQHSSQVVSRSSSAESIPYREAGFGSLGQGGRGLQGRRTPRDSYNETPSPASTHSLSYRTSSASSGQGIFSFRPSPNGHSGHTRVLTPNNFAQRESTTTLESLPSFQLPVLQTLYQQRRHMGLPSGREAWTTSR</sequence>
<keyword id="KW-0158">Chromosome</keyword>
<keyword id="KW-0175">Coiled coil</keyword>
<keyword id="KW-0469">Meiosis</keyword>
<keyword id="KW-0479">Metal-binding</keyword>
<keyword id="KW-1267">Proteomics identification</keyword>
<keyword id="KW-1185">Reference proteome</keyword>
<keyword id="KW-0808">Transferase</keyword>
<keyword id="KW-0832">Ubl conjugation</keyword>
<keyword id="KW-0862">Zinc</keyword>
<keyword id="KW-0863">Zinc-finger</keyword>
<dbReference type="EC" id="2.3.2.27" evidence="1"/>
<dbReference type="EMBL" id="AL117258">
    <property type="status" value="NOT_ANNOTATED_CDS"/>
    <property type="molecule type" value="Genomic_DNA"/>
</dbReference>
<dbReference type="EMBL" id="CH471078">
    <property type="protein sequence ID" value="EAW66180.1"/>
    <property type="molecule type" value="Genomic_DNA"/>
</dbReference>
<dbReference type="EMBL" id="EB710205">
    <property type="status" value="NOT_ANNOTATED_CDS"/>
    <property type="molecule type" value="mRNA"/>
</dbReference>
<dbReference type="CCDS" id="CCDS61401.1"/>
<dbReference type="RefSeq" id="NP_001269251.1">
    <property type="nucleotide sequence ID" value="NM_001282322.3"/>
</dbReference>
<dbReference type="RefSeq" id="NP_001357147.1">
    <property type="nucleotide sequence ID" value="NM_001370218.3"/>
</dbReference>
<dbReference type="RefSeq" id="XP_011534615.1">
    <property type="nucleotide sequence ID" value="XM_011536313.2"/>
</dbReference>
<dbReference type="SMR" id="A8MTL3"/>
<dbReference type="FunCoup" id="A8MTL3">
    <property type="interactions" value="12"/>
</dbReference>
<dbReference type="STRING" id="9606.ENSP00000382794"/>
<dbReference type="GlyGen" id="A8MTL3">
    <property type="glycosylation" value="1 site, 1 O-linked glycan (1 site)"/>
</dbReference>
<dbReference type="iPTMnet" id="A8MTL3"/>
<dbReference type="PhosphoSitePlus" id="A8MTL3"/>
<dbReference type="BioMuta" id="RNF212B"/>
<dbReference type="MassIVE" id="A8MTL3"/>
<dbReference type="PaxDb" id="9606-ENSP00000382794"/>
<dbReference type="PeptideAtlas" id="A8MTL3"/>
<dbReference type="ProteomicsDB" id="2033"/>
<dbReference type="Antibodypedia" id="64489">
    <property type="antibodies" value="6 antibodies from 6 providers"/>
</dbReference>
<dbReference type="DNASU" id="100507650"/>
<dbReference type="Ensembl" id="ENST00000399910.5">
    <property type="protein sequence ID" value="ENSP00000382794.1"/>
    <property type="gene ID" value="ENSG00000215277.9"/>
</dbReference>
<dbReference type="Ensembl" id="ENST00000430154.7">
    <property type="protein sequence ID" value="ENSP00000397830.2"/>
    <property type="gene ID" value="ENSG00000215277.9"/>
</dbReference>
<dbReference type="GeneID" id="100507650"/>
<dbReference type="KEGG" id="hsa:100507650"/>
<dbReference type="MANE-Select" id="ENST00000430154.7">
    <property type="protein sequence ID" value="ENSP00000397830.2"/>
    <property type="RefSeq nucleotide sequence ID" value="NM_001282322.3"/>
    <property type="RefSeq protein sequence ID" value="NP_001269251.1"/>
</dbReference>
<dbReference type="UCSC" id="uc058zpp.1">
    <property type="organism name" value="human"/>
</dbReference>
<dbReference type="AGR" id="HGNC:20438"/>
<dbReference type="CTD" id="100507650"/>
<dbReference type="DisGeNET" id="100507650"/>
<dbReference type="GeneCards" id="RNF212B"/>
<dbReference type="HGNC" id="HGNC:20438">
    <property type="gene designation" value="RNF212B"/>
</dbReference>
<dbReference type="HPA" id="ENSG00000215277">
    <property type="expression patterns" value="Tissue enriched (kidney)"/>
</dbReference>
<dbReference type="MIM" id="621020">
    <property type="type" value="gene"/>
</dbReference>
<dbReference type="neXtProt" id="NX_A8MTL3"/>
<dbReference type="OpenTargets" id="ENSG00000215277"/>
<dbReference type="VEuPathDB" id="HostDB:ENSG00000215277"/>
<dbReference type="eggNOG" id="KOG4739">
    <property type="taxonomic scope" value="Eukaryota"/>
</dbReference>
<dbReference type="GeneTree" id="ENSGT00740000115581"/>
<dbReference type="HOGENOM" id="CLU_067832_0_0_1"/>
<dbReference type="InParanoid" id="A8MTL3"/>
<dbReference type="OMA" id="QVWRFQK"/>
<dbReference type="OrthoDB" id="2535391at2759"/>
<dbReference type="PAN-GO" id="A8MTL3">
    <property type="GO annotations" value="4 GO annotations based on evolutionary models"/>
</dbReference>
<dbReference type="PhylomeDB" id="A8MTL3"/>
<dbReference type="TreeFam" id="TF319600"/>
<dbReference type="PathwayCommons" id="A8MTL3"/>
<dbReference type="SignaLink" id="A8MTL3"/>
<dbReference type="SIGNOR" id="A8MTL3"/>
<dbReference type="UniPathway" id="UPA00143"/>
<dbReference type="BioGRID-ORCS" id="100507650">
    <property type="hits" value="18 hits in 1011 CRISPR screens"/>
</dbReference>
<dbReference type="ChiTaRS" id="RNF212B">
    <property type="organism name" value="human"/>
</dbReference>
<dbReference type="Pharos" id="A8MTL3">
    <property type="development level" value="Tdark"/>
</dbReference>
<dbReference type="PRO" id="PR:A8MTL3"/>
<dbReference type="Proteomes" id="UP000005640">
    <property type="component" value="Chromosome 14"/>
</dbReference>
<dbReference type="RNAct" id="A8MTL3">
    <property type="molecule type" value="protein"/>
</dbReference>
<dbReference type="Bgee" id="ENSG00000215277">
    <property type="expression patterns" value="Expressed in kidney epithelium and 102 other cell types or tissues"/>
</dbReference>
<dbReference type="ExpressionAtlas" id="A8MTL3">
    <property type="expression patterns" value="baseline and differential"/>
</dbReference>
<dbReference type="GO" id="GO:0000795">
    <property type="term" value="C:synaptonemal complex"/>
    <property type="evidence" value="ECO:0000250"/>
    <property type="project" value="UniProtKB"/>
</dbReference>
<dbReference type="GO" id="GO:0019789">
    <property type="term" value="F:SUMO transferase activity"/>
    <property type="evidence" value="ECO:0000318"/>
    <property type="project" value="GO_Central"/>
</dbReference>
<dbReference type="GO" id="GO:0061630">
    <property type="term" value="F:ubiquitin protein ligase activity"/>
    <property type="evidence" value="ECO:0000250"/>
    <property type="project" value="UniProtKB"/>
</dbReference>
<dbReference type="GO" id="GO:0008270">
    <property type="term" value="F:zinc ion binding"/>
    <property type="evidence" value="ECO:0007669"/>
    <property type="project" value="UniProtKB-KW"/>
</dbReference>
<dbReference type="GO" id="GO:0051026">
    <property type="term" value="P:chiasma assembly"/>
    <property type="evidence" value="ECO:0000250"/>
    <property type="project" value="UniProtKB"/>
</dbReference>
<dbReference type="GO" id="GO:0007129">
    <property type="term" value="P:homologous chromosome pairing at meiosis"/>
    <property type="evidence" value="ECO:0000250"/>
    <property type="project" value="UniProtKB"/>
</dbReference>
<dbReference type="GO" id="GO:0016567">
    <property type="term" value="P:protein ubiquitination"/>
    <property type="evidence" value="ECO:0000250"/>
    <property type="project" value="UniProtKB"/>
</dbReference>
<dbReference type="CDD" id="cd16747">
    <property type="entry name" value="RING-HC_RNF212B"/>
    <property type="match status" value="1"/>
</dbReference>
<dbReference type="InterPro" id="IPR042123">
    <property type="entry name" value="Zip3/RNF212-like"/>
</dbReference>
<dbReference type="InterPro" id="IPR017907">
    <property type="entry name" value="Znf_RING_CS"/>
</dbReference>
<dbReference type="PANTHER" id="PTHR22663:SF29">
    <property type="entry name" value="RING FINGER PROTEIN 212B"/>
    <property type="match status" value="1"/>
</dbReference>
<dbReference type="PANTHER" id="PTHR22663">
    <property type="entry name" value="RING FINGER PROTEIN NARYA-RELATED"/>
    <property type="match status" value="1"/>
</dbReference>
<dbReference type="PROSITE" id="PS00518">
    <property type="entry name" value="ZF_RING_1"/>
    <property type="match status" value="1"/>
</dbReference>
<evidence type="ECO:0000250" key="1">
    <source>
        <dbReference type="UniProtKB" id="D3Z423"/>
    </source>
</evidence>
<evidence type="ECO:0000255" key="2"/>
<evidence type="ECO:0000256" key="3">
    <source>
        <dbReference type="SAM" id="MobiDB-lite"/>
    </source>
</evidence>
<evidence type="ECO:0000269" key="4">
    <source>
    </source>
</evidence>
<evidence type="ECO:0000305" key="5"/>
<protein>
    <recommendedName>
        <fullName>E3 ubiquitin-protein ligase RNF212B</fullName>
        <ecNumber evidence="1">2.3.2.27</ecNumber>
    </recommendedName>
    <alternativeName>
        <fullName>RING finger protein 212B</fullName>
    </alternativeName>
</protein>
<gene>
    <name type="primary">RNF212B</name>
    <name type="synonym">C14orf164</name>
</gene>
<proteinExistence type="evidence at protein level"/>
<reference key="1">
    <citation type="journal article" date="2003" name="Nature">
        <title>The DNA sequence and analysis of human chromosome 14.</title>
        <authorList>
            <person name="Heilig R."/>
            <person name="Eckenberg R."/>
            <person name="Petit J.-L."/>
            <person name="Fonknechten N."/>
            <person name="Da Silva C."/>
            <person name="Cattolico L."/>
            <person name="Levy M."/>
            <person name="Barbe V."/>
            <person name="De Berardinis V."/>
            <person name="Ureta-Vidal A."/>
            <person name="Pelletier E."/>
            <person name="Vico V."/>
            <person name="Anthouard V."/>
            <person name="Rowen L."/>
            <person name="Madan A."/>
            <person name="Qin S."/>
            <person name="Sun H."/>
            <person name="Du H."/>
            <person name="Pepin K."/>
            <person name="Artiguenave F."/>
            <person name="Robert C."/>
            <person name="Cruaud C."/>
            <person name="Bruels T."/>
            <person name="Jaillon O."/>
            <person name="Friedlander L."/>
            <person name="Samson G."/>
            <person name="Brottier P."/>
            <person name="Cure S."/>
            <person name="Segurens B."/>
            <person name="Aniere F."/>
            <person name="Samain S."/>
            <person name="Crespeau H."/>
            <person name="Abbasi N."/>
            <person name="Aiach N."/>
            <person name="Boscus D."/>
            <person name="Dickhoff R."/>
            <person name="Dors M."/>
            <person name="Dubois I."/>
            <person name="Friedman C."/>
            <person name="Gouyvenoux M."/>
            <person name="James R."/>
            <person name="Madan A."/>
            <person name="Mairey-Estrada B."/>
            <person name="Mangenot S."/>
            <person name="Martins N."/>
            <person name="Menard M."/>
            <person name="Oztas S."/>
            <person name="Ratcliffe A."/>
            <person name="Shaffer T."/>
            <person name="Trask B."/>
            <person name="Vacherie B."/>
            <person name="Bellemere C."/>
            <person name="Belser C."/>
            <person name="Besnard-Gonnet M."/>
            <person name="Bartol-Mavel D."/>
            <person name="Boutard M."/>
            <person name="Briez-Silla S."/>
            <person name="Combette S."/>
            <person name="Dufosse-Laurent V."/>
            <person name="Ferron C."/>
            <person name="Lechaplais C."/>
            <person name="Louesse C."/>
            <person name="Muselet D."/>
            <person name="Magdelenat G."/>
            <person name="Pateau E."/>
            <person name="Petit E."/>
            <person name="Sirvain-Trukniewicz P."/>
            <person name="Trybou A."/>
            <person name="Vega-Czarny N."/>
            <person name="Bataille E."/>
            <person name="Bluet E."/>
            <person name="Bordelais I."/>
            <person name="Dubois M."/>
            <person name="Dumont C."/>
            <person name="Guerin T."/>
            <person name="Haffray S."/>
            <person name="Hammadi R."/>
            <person name="Muanga J."/>
            <person name="Pellouin V."/>
            <person name="Robert D."/>
            <person name="Wunderle E."/>
            <person name="Gauguet G."/>
            <person name="Roy A."/>
            <person name="Sainte-Marthe L."/>
            <person name="Verdier J."/>
            <person name="Verdier-Discala C."/>
            <person name="Hillier L.W."/>
            <person name="Fulton L."/>
            <person name="McPherson J."/>
            <person name="Matsuda F."/>
            <person name="Wilson R."/>
            <person name="Scarpelli C."/>
            <person name="Gyapay G."/>
            <person name="Wincker P."/>
            <person name="Saurin W."/>
            <person name="Quetier F."/>
            <person name="Waterston R."/>
            <person name="Hood L."/>
            <person name="Weissenbach J."/>
        </authorList>
    </citation>
    <scope>NUCLEOTIDE SEQUENCE [LARGE SCALE GENOMIC DNA]</scope>
</reference>
<reference key="2">
    <citation type="submission" date="2005-09" db="EMBL/GenBank/DDBJ databases">
        <authorList>
            <person name="Mural R.J."/>
            <person name="Istrail S."/>
            <person name="Sutton G.G."/>
            <person name="Florea L."/>
            <person name="Halpern A.L."/>
            <person name="Mobarry C.M."/>
            <person name="Lippert R."/>
            <person name="Walenz B."/>
            <person name="Shatkay H."/>
            <person name="Dew I."/>
            <person name="Miller J.R."/>
            <person name="Flanigan M.J."/>
            <person name="Edwards N.J."/>
            <person name="Bolanos R."/>
            <person name="Fasulo D."/>
            <person name="Halldorsson B.V."/>
            <person name="Hannenhalli S."/>
            <person name="Turner R."/>
            <person name="Yooseph S."/>
            <person name="Lu F."/>
            <person name="Nusskern D.R."/>
            <person name="Shue B.C."/>
            <person name="Zheng X.H."/>
            <person name="Zhong F."/>
            <person name="Delcher A.L."/>
            <person name="Huson D.H."/>
            <person name="Kravitz S.A."/>
            <person name="Mouchard L."/>
            <person name="Reinert K."/>
            <person name="Remington K.A."/>
            <person name="Clark A.G."/>
            <person name="Waterman M.S."/>
            <person name="Eichler E.E."/>
            <person name="Adams M.D."/>
            <person name="Hunkapiller M.W."/>
            <person name="Myers E.W."/>
            <person name="Venter J.C."/>
        </authorList>
    </citation>
    <scope>NUCLEOTIDE SEQUENCE [LARGE SCALE GENOMIC DNA]</scope>
</reference>
<reference key="3">
    <citation type="submission" date="2006-05" db="EMBL/GenBank/DDBJ databases">
        <title>Exhaustive RT-PCR and sequencing of all novel TWINSCAN predictions in human.</title>
        <authorList>
            <person name="Stevens M."/>
            <person name="Wei C."/>
            <person name="Gross S.S."/>
            <person name="McPherson J."/>
            <person name="Brent M.R."/>
        </authorList>
    </citation>
    <scope>NUCLEOTIDE SEQUENCE [LARGE SCALE MRNA] OF 34-250</scope>
</reference>
<reference key="4">
    <citation type="journal article" date="2023" name="HGG Adv.">
        <title>A pathogenic variant in the uncharacterized RNF212B gene results in severe aneuploidy male infertility and repeated IVF failure.</title>
        <authorList>
            <person name="Gershoni M."/>
            <person name="Braun T."/>
            <person name="Hauser R."/>
            <person name="Barda S."/>
            <person name="Lehavi O."/>
            <person name="Malcov M."/>
            <person name="Frumkin T."/>
            <person name="Kalma Y."/>
            <person name="Pietrokovski S."/>
            <person name="Arama E."/>
            <person name="Kleiman S.E."/>
        </authorList>
    </citation>
    <scope>VARIANT 150-ARG--ARG-300 DEL</scope>
</reference>
<organism>
    <name type="scientific">Homo sapiens</name>
    <name type="common">Human</name>
    <dbReference type="NCBI Taxonomy" id="9606"/>
    <lineage>
        <taxon>Eukaryota</taxon>
        <taxon>Metazoa</taxon>
        <taxon>Chordata</taxon>
        <taxon>Craniata</taxon>
        <taxon>Vertebrata</taxon>
        <taxon>Euteleostomi</taxon>
        <taxon>Mammalia</taxon>
        <taxon>Eutheria</taxon>
        <taxon>Euarchontoglires</taxon>
        <taxon>Primates</taxon>
        <taxon>Haplorrhini</taxon>
        <taxon>Catarrhini</taxon>
        <taxon>Hominidae</taxon>
        <taxon>Homo</taxon>
    </lineage>
</organism>
<accession>A8MTL3</accession>
<name>R212B_HUMAN</name>
<comment type="function">
    <text evidence="1">Ubiquitin E3 ligase that acts as a crucial factor for crossing-over (CO) formation during meiosis. Essential for normal prophase I progression and for ensuring appropriate CO designation in meiosis. Recruits key components of the cross-over machinery either directly ou indirectly, leading to the activation of the MutL-gamma complex. The function of RNF212B in CO designation is dependent on its catalytic activity.</text>
</comment>
<comment type="catalytic activity">
    <reaction evidence="1">
        <text>S-ubiquitinyl-[E2 ubiquitin-conjugating enzyme]-L-cysteine + [acceptor protein]-L-lysine = [E2 ubiquitin-conjugating enzyme]-L-cysteine + N(6)-ubiquitinyl-[acceptor protein]-L-lysine.</text>
        <dbReference type="EC" id="2.3.2.27"/>
    </reaction>
</comment>
<comment type="pathway">
    <text evidence="1">Protein modification; protein ubiquitination.</text>
</comment>
<comment type="subunit">
    <text evidence="1">Homodimer.</text>
</comment>
<comment type="subcellular location">
    <subcellularLocation>
        <location evidence="1">Chromosome</location>
    </subcellularLocation>
    <text evidence="1">Colocalizes with RNF212.</text>
</comment>
<comment type="PTM">
    <text evidence="1">Autoubiquitinated.</text>
</comment>
<comment type="sequence caution" evidence="5">
    <conflict type="frameshift">
        <sequence resource="EMBL" id="EB710205"/>
    </conflict>
</comment>
<feature type="chain" id="PRO_0000349181" description="E3 ubiquitin-protein ligase RNF212B">
    <location>
        <begin position="1"/>
        <end position="300"/>
    </location>
</feature>
<feature type="zinc finger region" description="RING-type">
    <location>
        <begin position="6"/>
        <end position="40"/>
    </location>
</feature>
<feature type="region of interest" description="Disordered" evidence="3">
    <location>
        <begin position="141"/>
        <end position="232"/>
    </location>
</feature>
<feature type="coiled-coil region" evidence="2">
    <location>
        <begin position="87"/>
        <end position="124"/>
    </location>
</feature>
<feature type="compositionally biased region" description="Polar residues" evidence="3">
    <location>
        <begin position="155"/>
        <end position="165"/>
    </location>
</feature>
<feature type="compositionally biased region" description="Low complexity" evidence="3">
    <location>
        <begin position="166"/>
        <end position="182"/>
    </location>
</feature>
<feature type="compositionally biased region" description="Gly residues" evidence="3">
    <location>
        <begin position="191"/>
        <end position="200"/>
    </location>
</feature>
<feature type="compositionally biased region" description="Polar residues" evidence="3">
    <location>
        <begin position="211"/>
        <end position="232"/>
    </location>
</feature>
<feature type="sequence variant" id="VAR_089706" description="Found in infertile men; uncertain significance." evidence="4">
    <location>
        <begin position="150"/>
        <end position="300"/>
    </location>
</feature>
<feature type="sequence conflict" description="In Ref. 3; EB710205." evidence="5" ref="3">
    <original>S</original>
    <variation>T</variation>
    <location>
        <position position="227"/>
    </location>
</feature>
<feature type="sequence conflict" description="In Ref. 3; EB710205." evidence="5" ref="3">
    <original>G</original>
    <variation>E</variation>
    <location>
        <position position="234"/>
    </location>
</feature>